<gene>
    <name evidence="1" type="primary">yeaH</name>
    <name type="ordered locus">SeSA_A1377</name>
</gene>
<accession>B4TUA0</accession>
<name>YEAH_SALSV</name>
<feature type="chain" id="PRO_1000139658" description="UPF0229 protein YeaH">
    <location>
        <begin position="1"/>
        <end position="428"/>
    </location>
</feature>
<feature type="region of interest" description="Disordered" evidence="2">
    <location>
        <begin position="78"/>
        <end position="111"/>
    </location>
</feature>
<feature type="compositionally biased region" description="Basic and acidic residues" evidence="2">
    <location>
        <begin position="78"/>
        <end position="90"/>
    </location>
</feature>
<feature type="compositionally biased region" description="Gly residues" evidence="2">
    <location>
        <begin position="92"/>
        <end position="103"/>
    </location>
</feature>
<reference key="1">
    <citation type="journal article" date="2011" name="J. Bacteriol.">
        <title>Comparative genomics of 28 Salmonella enterica isolates: evidence for CRISPR-mediated adaptive sublineage evolution.</title>
        <authorList>
            <person name="Fricke W.F."/>
            <person name="Mammel M.K."/>
            <person name="McDermott P.F."/>
            <person name="Tartera C."/>
            <person name="White D.G."/>
            <person name="Leclerc J.E."/>
            <person name="Ravel J."/>
            <person name="Cebula T.A."/>
        </authorList>
    </citation>
    <scope>NUCLEOTIDE SEQUENCE [LARGE SCALE GENOMIC DNA]</scope>
    <source>
        <strain>CVM19633</strain>
    </source>
</reference>
<evidence type="ECO:0000255" key="1">
    <source>
        <dbReference type="HAMAP-Rule" id="MF_01232"/>
    </source>
</evidence>
<evidence type="ECO:0000256" key="2">
    <source>
        <dbReference type="SAM" id="MobiDB-lite"/>
    </source>
</evidence>
<comment type="similarity">
    <text evidence="1">Belongs to the UPF0229 family.</text>
</comment>
<organism>
    <name type="scientific">Salmonella schwarzengrund (strain CVM19633)</name>
    <dbReference type="NCBI Taxonomy" id="439843"/>
    <lineage>
        <taxon>Bacteria</taxon>
        <taxon>Pseudomonadati</taxon>
        <taxon>Pseudomonadota</taxon>
        <taxon>Gammaproteobacteria</taxon>
        <taxon>Enterobacterales</taxon>
        <taxon>Enterobacteriaceae</taxon>
        <taxon>Salmonella</taxon>
    </lineage>
</organism>
<dbReference type="EMBL" id="CP001127">
    <property type="protein sequence ID" value="ACF88977.1"/>
    <property type="molecule type" value="Genomic_DNA"/>
</dbReference>
<dbReference type="RefSeq" id="WP_000219714.1">
    <property type="nucleotide sequence ID" value="NC_011094.1"/>
</dbReference>
<dbReference type="SMR" id="B4TUA0"/>
<dbReference type="KEGG" id="sew:SeSA_A1377"/>
<dbReference type="HOGENOM" id="CLU_049702_0_0_6"/>
<dbReference type="Proteomes" id="UP000001865">
    <property type="component" value="Chromosome"/>
</dbReference>
<dbReference type="HAMAP" id="MF_01232">
    <property type="entry name" value="UPF0229"/>
    <property type="match status" value="1"/>
</dbReference>
<dbReference type="InterPro" id="IPR006698">
    <property type="entry name" value="UPF0229"/>
</dbReference>
<dbReference type="NCBIfam" id="NF003707">
    <property type="entry name" value="PRK05325.1-2"/>
    <property type="match status" value="1"/>
</dbReference>
<dbReference type="NCBIfam" id="NF003708">
    <property type="entry name" value="PRK05325.1-3"/>
    <property type="match status" value="1"/>
</dbReference>
<dbReference type="PANTHER" id="PTHR30510">
    <property type="entry name" value="UPF0229 PROTEIN YEAH"/>
    <property type="match status" value="1"/>
</dbReference>
<dbReference type="PANTHER" id="PTHR30510:SF2">
    <property type="entry name" value="UPF0229 PROTEIN YEAH"/>
    <property type="match status" value="1"/>
</dbReference>
<dbReference type="Pfam" id="PF04285">
    <property type="entry name" value="DUF444"/>
    <property type="match status" value="1"/>
</dbReference>
<proteinExistence type="inferred from homology"/>
<sequence length="428" mass="49515">MTWFIDRRLNGKNKSTVNRQRFLRRYKAQIKQSISEAINKRSVTDVDSGESVSIPTDDISEPMFHQGRGGLRHRVHPGNDHFIQNDRIERPQGGGGGGSGSGQGQASQDGEGQDEFVFQISKDEYLDLLFEDLALPNLKKNQHRQLNEYKTHRAGFTSNGVPANISVVRSLQNSLARRTAMTAGKRRELHALETELETISHSEPAQLLEEERLRREIAELRAKIERVPFIDTFDLRYKNYEKRPEPSSQAVMFCLMDVSGSMDQATKDMAKRFYILLYLFLSRTYKNVEVVYIRHHTQAKEVDEHEFFYSQETGGTIVSSALKLMDEVVKERYDPGQWNIYAAQASDGDNWADDSPLCHEILAKKLLPVVRYYSYIEITRRAHQTLWREYEHLQATFDNFAMQHIRDQEDIYPVFRELFQKQSANQSA</sequence>
<protein>
    <recommendedName>
        <fullName evidence="1">UPF0229 protein YeaH</fullName>
    </recommendedName>
</protein>